<proteinExistence type="inferred from homology"/>
<feature type="chain" id="PRO_1000215733" description="3-ketoacyl-CoA thiolase">
    <location>
        <begin position="1"/>
        <end position="437"/>
    </location>
</feature>
<feature type="active site" description="Acyl-thioester intermediate" evidence="1">
    <location>
        <position position="99"/>
    </location>
</feature>
<feature type="active site" description="Proton acceptor" evidence="1">
    <location>
        <position position="392"/>
    </location>
</feature>
<feature type="active site" description="Proton acceptor" evidence="1">
    <location>
        <position position="422"/>
    </location>
</feature>
<comment type="function">
    <text evidence="1">Catalyzes the final step of fatty acid oxidation in which acetyl-CoA is released and the CoA ester of a fatty acid two carbons shorter is formed.</text>
</comment>
<comment type="catalytic activity">
    <reaction evidence="1">
        <text>an acyl-CoA + acetyl-CoA = a 3-oxoacyl-CoA + CoA</text>
        <dbReference type="Rhea" id="RHEA:21564"/>
        <dbReference type="ChEBI" id="CHEBI:57287"/>
        <dbReference type="ChEBI" id="CHEBI:57288"/>
        <dbReference type="ChEBI" id="CHEBI:58342"/>
        <dbReference type="ChEBI" id="CHEBI:90726"/>
        <dbReference type="EC" id="2.3.1.16"/>
    </reaction>
</comment>
<comment type="pathway">
    <text evidence="1">Lipid metabolism; fatty acid beta-oxidation.</text>
</comment>
<comment type="subunit">
    <text evidence="1">Heterotetramer of two alpha chains (FadJ) and two beta chains (FadI).</text>
</comment>
<comment type="subcellular location">
    <subcellularLocation>
        <location evidence="1">Cytoplasm</location>
    </subcellularLocation>
</comment>
<comment type="similarity">
    <text evidence="1">Belongs to the thiolase-like superfamily. Thiolase family.</text>
</comment>
<dbReference type="EC" id="2.3.1.16" evidence="1"/>
<dbReference type="EMBL" id="CP001657">
    <property type="protein sequence ID" value="ACT13852.1"/>
    <property type="molecule type" value="Genomic_DNA"/>
</dbReference>
<dbReference type="RefSeq" id="WP_015841012.1">
    <property type="nucleotide sequence ID" value="NC_012917.1"/>
</dbReference>
<dbReference type="SMR" id="C6DAL8"/>
<dbReference type="STRING" id="561230.PC1_2822"/>
<dbReference type="KEGG" id="pct:PC1_2822"/>
<dbReference type="eggNOG" id="COG0183">
    <property type="taxonomic scope" value="Bacteria"/>
</dbReference>
<dbReference type="HOGENOM" id="CLU_031026_2_0_6"/>
<dbReference type="OrthoDB" id="8951704at2"/>
<dbReference type="UniPathway" id="UPA00659"/>
<dbReference type="Proteomes" id="UP000002736">
    <property type="component" value="Chromosome"/>
</dbReference>
<dbReference type="GO" id="GO:0005829">
    <property type="term" value="C:cytosol"/>
    <property type="evidence" value="ECO:0007669"/>
    <property type="project" value="TreeGrafter"/>
</dbReference>
<dbReference type="GO" id="GO:0003988">
    <property type="term" value="F:acetyl-CoA C-acyltransferase activity"/>
    <property type="evidence" value="ECO:0007669"/>
    <property type="project" value="UniProtKB-UniRule"/>
</dbReference>
<dbReference type="GO" id="GO:0006635">
    <property type="term" value="P:fatty acid beta-oxidation"/>
    <property type="evidence" value="ECO:0007669"/>
    <property type="project" value="UniProtKB-UniRule"/>
</dbReference>
<dbReference type="CDD" id="cd00751">
    <property type="entry name" value="thiolase"/>
    <property type="match status" value="1"/>
</dbReference>
<dbReference type="FunFam" id="3.40.47.10:FF:000011">
    <property type="entry name" value="3-ketoacyl-CoA thiolase"/>
    <property type="match status" value="1"/>
</dbReference>
<dbReference type="Gene3D" id="3.40.47.10">
    <property type="match status" value="1"/>
</dbReference>
<dbReference type="HAMAP" id="MF_01618">
    <property type="entry name" value="FadI"/>
    <property type="match status" value="1"/>
</dbReference>
<dbReference type="InterPro" id="IPR050521">
    <property type="entry name" value="3-ketoacyl-CoA_Thiolase"/>
</dbReference>
<dbReference type="InterPro" id="IPR012806">
    <property type="entry name" value="Ac-CoA_C-AcTrfase_FadI"/>
</dbReference>
<dbReference type="InterPro" id="IPR002155">
    <property type="entry name" value="Thiolase"/>
</dbReference>
<dbReference type="InterPro" id="IPR016039">
    <property type="entry name" value="Thiolase-like"/>
</dbReference>
<dbReference type="InterPro" id="IPR020615">
    <property type="entry name" value="Thiolase_acyl_enz_int_AS"/>
</dbReference>
<dbReference type="InterPro" id="IPR020610">
    <property type="entry name" value="Thiolase_AS"/>
</dbReference>
<dbReference type="InterPro" id="IPR020617">
    <property type="entry name" value="Thiolase_C"/>
</dbReference>
<dbReference type="InterPro" id="IPR020613">
    <property type="entry name" value="Thiolase_CS"/>
</dbReference>
<dbReference type="InterPro" id="IPR020616">
    <property type="entry name" value="Thiolase_N"/>
</dbReference>
<dbReference type="NCBIfam" id="TIGR01930">
    <property type="entry name" value="AcCoA-C-Actrans"/>
    <property type="match status" value="1"/>
</dbReference>
<dbReference type="NCBIfam" id="TIGR02446">
    <property type="entry name" value="FadI"/>
    <property type="match status" value="1"/>
</dbReference>
<dbReference type="NCBIfam" id="NF006516">
    <property type="entry name" value="PRK08963.1"/>
    <property type="match status" value="1"/>
</dbReference>
<dbReference type="PANTHER" id="PTHR42689">
    <property type="entry name" value="ACETYL-COA ACYLTRANSFERASE FADA2 (3-KETOACYL-COA THIOLASE) (BETA-KETOTHIOLASE)-RELATED"/>
    <property type="match status" value="1"/>
</dbReference>
<dbReference type="PANTHER" id="PTHR42689:SF1">
    <property type="entry name" value="ACETYL-COA ACYLTRANSFERASE FADA2 (3-KETOACYL-COA THIOLASE) (BETA-KETOTHIOLASE)-RELATED"/>
    <property type="match status" value="1"/>
</dbReference>
<dbReference type="Pfam" id="PF02803">
    <property type="entry name" value="Thiolase_C"/>
    <property type="match status" value="1"/>
</dbReference>
<dbReference type="Pfam" id="PF00108">
    <property type="entry name" value="Thiolase_N"/>
    <property type="match status" value="1"/>
</dbReference>
<dbReference type="PIRSF" id="PIRSF000429">
    <property type="entry name" value="Ac-CoA_Ac_transf"/>
    <property type="match status" value="1"/>
</dbReference>
<dbReference type="SUPFAM" id="SSF53901">
    <property type="entry name" value="Thiolase-like"/>
    <property type="match status" value="2"/>
</dbReference>
<dbReference type="PROSITE" id="PS00098">
    <property type="entry name" value="THIOLASE_1"/>
    <property type="match status" value="1"/>
</dbReference>
<dbReference type="PROSITE" id="PS00737">
    <property type="entry name" value="THIOLASE_2"/>
    <property type="match status" value="1"/>
</dbReference>
<dbReference type="PROSITE" id="PS00099">
    <property type="entry name" value="THIOLASE_3"/>
    <property type="match status" value="1"/>
</dbReference>
<organism>
    <name type="scientific">Pectobacterium carotovorum subsp. carotovorum (strain PC1)</name>
    <dbReference type="NCBI Taxonomy" id="561230"/>
    <lineage>
        <taxon>Bacteria</taxon>
        <taxon>Pseudomonadati</taxon>
        <taxon>Pseudomonadota</taxon>
        <taxon>Gammaproteobacteria</taxon>
        <taxon>Enterobacterales</taxon>
        <taxon>Pectobacteriaceae</taxon>
        <taxon>Pectobacterium</taxon>
    </lineage>
</organism>
<protein>
    <recommendedName>
        <fullName evidence="1">3-ketoacyl-CoA thiolase</fullName>
        <ecNumber evidence="1">2.3.1.16</ecNumber>
    </recommendedName>
    <alternativeName>
        <fullName evidence="1">ACSs</fullName>
    </alternativeName>
    <alternativeName>
        <fullName evidence="1">Acetyl-CoA acyltransferase</fullName>
    </alternativeName>
    <alternativeName>
        <fullName evidence="1">Acyl-CoA ligase</fullName>
    </alternativeName>
    <alternativeName>
        <fullName evidence="1">Beta-ketothiolase</fullName>
    </alternativeName>
    <alternativeName>
        <fullName evidence="1">Fatty acid oxidation complex subunit beta</fullName>
    </alternativeName>
</protein>
<sequence length="437" mass="46366">MSEVLPLITRRGDRIAFVSGLRTPFARQATAYHGVPALELGKLVTSELLVRTGIDPELIELLVFGQVVQMPEAPNIAREIVLGTGMSVHTDAYSVSRACATSFQAVANVAESIMAGTVEVGIAGGADSSSVLPIGVSKALARTLVDMNKARTLGQKLKLLSGLRPKDLLPVAPAVAEYSTGLRMGDTAEQMAKTYGITREEQDELAHRSHKLAAQAWESGVLRDEVMTAYVPPYEKALSEDNNVRHDSALEQYSRLRPAFDRRHGTVTAANSTPLTDGAAAVLMMSESRAKSLGLTPLGYLRSYAFSAIGVQRDMLLGPAYASPLALARAGVKLADLTLIDMHEAFAAQTLANLKLFASDEFARHQLGRNAALGEVDRAKFNVLGGSIAYGHPFAATGARMITQTLNELRRRGGGLGLTTACAAGGLGAAMVLEVTP</sequence>
<accession>C6DAL8</accession>
<keyword id="KW-0012">Acyltransferase</keyword>
<keyword id="KW-0963">Cytoplasm</keyword>
<keyword id="KW-0276">Fatty acid metabolism</keyword>
<keyword id="KW-0442">Lipid degradation</keyword>
<keyword id="KW-0443">Lipid metabolism</keyword>
<keyword id="KW-0808">Transferase</keyword>
<gene>
    <name evidence="1" type="primary">fadI</name>
    <name type="ordered locus">PC1_2822</name>
</gene>
<evidence type="ECO:0000255" key="1">
    <source>
        <dbReference type="HAMAP-Rule" id="MF_01618"/>
    </source>
</evidence>
<reference key="1">
    <citation type="submission" date="2009-07" db="EMBL/GenBank/DDBJ databases">
        <title>Complete sequence of Pectobacterium carotovorum subsp. carotovorum PC1.</title>
        <authorList>
            <consortium name="US DOE Joint Genome Institute"/>
            <person name="Lucas S."/>
            <person name="Copeland A."/>
            <person name="Lapidus A."/>
            <person name="Glavina del Rio T."/>
            <person name="Tice H."/>
            <person name="Bruce D."/>
            <person name="Goodwin L."/>
            <person name="Pitluck S."/>
            <person name="Munk A.C."/>
            <person name="Brettin T."/>
            <person name="Detter J.C."/>
            <person name="Han C."/>
            <person name="Tapia R."/>
            <person name="Larimer F."/>
            <person name="Land M."/>
            <person name="Hauser L."/>
            <person name="Kyrpides N."/>
            <person name="Mikhailova N."/>
            <person name="Balakrishnan V."/>
            <person name="Glasner J."/>
            <person name="Perna N.T."/>
        </authorList>
    </citation>
    <scope>NUCLEOTIDE SEQUENCE [LARGE SCALE GENOMIC DNA]</scope>
    <source>
        <strain>PC1</strain>
    </source>
</reference>
<name>FADI_PECCP</name>